<name>CRBB2_CANLF</name>
<sequence length="205" mass="23333">MASDHQTQAGKPQPLNPKIIIFEQENFQGHSHELSGPCPNLKETGVEKAGSVLVQAGPWVGYEQANCKGEQFVFEKGEYPRWDSWTSSRRTDSLSSLRPIKVDSQEHKIILYENPNFTGKKMEIIDDDVPSFHAHGYQEKVSSVRVQSGTWVGYQYPGYRGLQYLLEKGDYKDSGDFGAPHPQVQSVRRIRDMQWHQRGAFHPSN</sequence>
<accession>Q2LEC2</accession>
<dbReference type="EMBL" id="DQ324463">
    <property type="protein sequence ID" value="ABC59315.1"/>
    <property type="molecule type" value="mRNA"/>
</dbReference>
<dbReference type="RefSeq" id="NP_001041578.1">
    <property type="nucleotide sequence ID" value="NM_001048113.1"/>
</dbReference>
<dbReference type="RefSeq" id="XP_038292016.1">
    <property type="nucleotide sequence ID" value="XM_038436088.1"/>
</dbReference>
<dbReference type="SMR" id="Q2LEC2"/>
<dbReference type="FunCoup" id="Q2LEC2">
    <property type="interactions" value="50"/>
</dbReference>
<dbReference type="STRING" id="9615.ENSCAFP00000017026"/>
<dbReference type="PaxDb" id="9612-ENSCAFP00000017026"/>
<dbReference type="Ensembl" id="ENSCAFT00000018382.5">
    <property type="protein sequence ID" value="ENSCAFP00000017026.3"/>
    <property type="gene ID" value="ENSCAFG00000023827.4"/>
</dbReference>
<dbReference type="Ensembl" id="ENSCAFT00030048286.1">
    <property type="protein sequence ID" value="ENSCAFP00030042249.1"/>
    <property type="gene ID" value="ENSCAFG00030026106.1"/>
</dbReference>
<dbReference type="Ensembl" id="ENSCAFT00040046977.1">
    <property type="protein sequence ID" value="ENSCAFP00040041009.1"/>
    <property type="gene ID" value="ENSCAFG00040025194.1"/>
</dbReference>
<dbReference type="Ensembl" id="ENSCAFT00845049384.1">
    <property type="protein sequence ID" value="ENSCAFP00845038748.1"/>
    <property type="gene ID" value="ENSCAFG00845027963.1"/>
</dbReference>
<dbReference type="GeneID" id="486326"/>
<dbReference type="KEGG" id="cfa:486326"/>
<dbReference type="CTD" id="1415"/>
<dbReference type="VEuPathDB" id="HostDB:ENSCAFG00845027963"/>
<dbReference type="VGNC" id="VGNC:39640">
    <property type="gene designation" value="CRYBB2"/>
</dbReference>
<dbReference type="eggNOG" id="ENOG502QVM6">
    <property type="taxonomic scope" value="Eukaryota"/>
</dbReference>
<dbReference type="GeneTree" id="ENSGT00940000160048"/>
<dbReference type="HOGENOM" id="CLU_081883_0_1_1"/>
<dbReference type="InParanoid" id="Q2LEC2"/>
<dbReference type="OMA" id="FRPIKQD"/>
<dbReference type="OrthoDB" id="8525367at2759"/>
<dbReference type="TreeFam" id="TF331401"/>
<dbReference type="Proteomes" id="UP000002254">
    <property type="component" value="Chromosome 26"/>
</dbReference>
<dbReference type="Proteomes" id="UP000694429">
    <property type="component" value="Chromosome 26"/>
</dbReference>
<dbReference type="Proteomes" id="UP000694542">
    <property type="component" value="Chromosome 26"/>
</dbReference>
<dbReference type="Proteomes" id="UP000805418">
    <property type="component" value="Chromosome 26"/>
</dbReference>
<dbReference type="Bgee" id="ENSCAFG00000023827">
    <property type="expression patterns" value="Expressed in tongue and 3 other cell types or tissues"/>
</dbReference>
<dbReference type="GO" id="GO:0042802">
    <property type="term" value="F:identical protein binding"/>
    <property type="evidence" value="ECO:0007669"/>
    <property type="project" value="Ensembl"/>
</dbReference>
<dbReference type="GO" id="GO:0005212">
    <property type="term" value="F:structural constituent of eye lens"/>
    <property type="evidence" value="ECO:0000318"/>
    <property type="project" value="GO_Central"/>
</dbReference>
<dbReference type="GO" id="GO:0002088">
    <property type="term" value="P:lens development in camera-type eye"/>
    <property type="evidence" value="ECO:0000318"/>
    <property type="project" value="GO_Central"/>
</dbReference>
<dbReference type="GO" id="GO:0007601">
    <property type="term" value="P:visual perception"/>
    <property type="evidence" value="ECO:0000318"/>
    <property type="project" value="GO_Central"/>
</dbReference>
<dbReference type="FunFam" id="2.60.20.10:FF:000005">
    <property type="entry name" value="Crystallin, beta B1"/>
    <property type="match status" value="1"/>
</dbReference>
<dbReference type="FunFam" id="2.60.20.10:FF:000002">
    <property type="entry name" value="Crystallin, beta B2"/>
    <property type="match status" value="1"/>
</dbReference>
<dbReference type="Gene3D" id="2.60.20.10">
    <property type="entry name" value="Crystallins"/>
    <property type="match status" value="2"/>
</dbReference>
<dbReference type="InterPro" id="IPR050252">
    <property type="entry name" value="Beta/Gamma-Crystallin"/>
</dbReference>
<dbReference type="InterPro" id="IPR001064">
    <property type="entry name" value="Beta/gamma_crystallin"/>
</dbReference>
<dbReference type="InterPro" id="IPR011024">
    <property type="entry name" value="G_crystallin-like"/>
</dbReference>
<dbReference type="PANTHER" id="PTHR11818:SF11">
    <property type="entry name" value="BETA-CRYSTALLIN B2"/>
    <property type="match status" value="1"/>
</dbReference>
<dbReference type="PANTHER" id="PTHR11818">
    <property type="entry name" value="BETA/GAMMA CRYSTALLIN"/>
    <property type="match status" value="1"/>
</dbReference>
<dbReference type="Pfam" id="PF00030">
    <property type="entry name" value="Crystall"/>
    <property type="match status" value="2"/>
</dbReference>
<dbReference type="PRINTS" id="PR01367">
    <property type="entry name" value="BGCRYSTALLIN"/>
</dbReference>
<dbReference type="SMART" id="SM00247">
    <property type="entry name" value="XTALbg"/>
    <property type="match status" value="2"/>
</dbReference>
<dbReference type="SUPFAM" id="SSF49695">
    <property type="entry name" value="gamma-Crystallin-like"/>
    <property type="match status" value="1"/>
</dbReference>
<dbReference type="PROSITE" id="PS50915">
    <property type="entry name" value="CRYSTALLIN_BETA_GAMMA"/>
    <property type="match status" value="4"/>
</dbReference>
<proteinExistence type="evidence at transcript level"/>
<reference key="1">
    <citation type="submission" date="2005-12" db="EMBL/GenBank/DDBJ databases">
        <authorList>
            <person name="Wistow G."/>
        </authorList>
    </citation>
    <scope>NUCLEOTIDE SEQUENCE [MRNA]</scope>
    <source>
        <tissue>Lens</tissue>
    </source>
</reference>
<gene>
    <name type="primary">CRYBB2</name>
</gene>
<organism>
    <name type="scientific">Canis lupus familiaris</name>
    <name type="common">Dog</name>
    <name type="synonym">Canis familiaris</name>
    <dbReference type="NCBI Taxonomy" id="9615"/>
    <lineage>
        <taxon>Eukaryota</taxon>
        <taxon>Metazoa</taxon>
        <taxon>Chordata</taxon>
        <taxon>Craniata</taxon>
        <taxon>Vertebrata</taxon>
        <taxon>Euteleostomi</taxon>
        <taxon>Mammalia</taxon>
        <taxon>Eutheria</taxon>
        <taxon>Laurasiatheria</taxon>
        <taxon>Carnivora</taxon>
        <taxon>Caniformia</taxon>
        <taxon>Canidae</taxon>
        <taxon>Canis</taxon>
    </lineage>
</organism>
<feature type="initiator methionine" description="Removed" evidence="2">
    <location>
        <position position="1"/>
    </location>
</feature>
<feature type="chain" id="PRO_0000289593" description="Beta-crystallin B2">
    <location>
        <begin position="2"/>
        <end position="205"/>
    </location>
</feature>
<feature type="domain" description="Beta/gamma crystallin 'Greek key' 1" evidence="3">
    <location>
        <begin position="17"/>
        <end position="56"/>
    </location>
</feature>
<feature type="domain" description="Beta/gamma crystallin 'Greek key' 2" evidence="3">
    <location>
        <begin position="57"/>
        <end position="101"/>
    </location>
</feature>
<feature type="domain" description="Beta/gamma crystallin 'Greek key' 3" evidence="3">
    <location>
        <begin position="107"/>
        <end position="148"/>
    </location>
</feature>
<feature type="domain" description="Beta/gamma crystallin 'Greek key' 4" evidence="3">
    <location>
        <begin position="149"/>
        <end position="191"/>
    </location>
</feature>
<feature type="region of interest" description="N-terminal arm">
    <location>
        <begin position="2"/>
        <end position="16"/>
    </location>
</feature>
<feature type="region of interest" description="Connecting peptide">
    <location>
        <begin position="102"/>
        <end position="106"/>
    </location>
</feature>
<feature type="region of interest" description="C-terminal arm">
    <location>
        <begin position="193"/>
        <end position="205"/>
    </location>
</feature>
<feature type="modified residue" description="N-acetylalanine" evidence="2">
    <location>
        <position position="2"/>
    </location>
</feature>
<protein>
    <recommendedName>
        <fullName>Beta-crystallin B2</fullName>
    </recommendedName>
    <alternativeName>
        <fullName>Beta-B2 crystallin</fullName>
    </alternativeName>
    <alternativeName>
        <fullName>Beta-crystallin Bp</fullName>
    </alternativeName>
</protein>
<evidence type="ECO:0000250" key="1"/>
<evidence type="ECO:0000250" key="2">
    <source>
        <dbReference type="UniProtKB" id="P02522"/>
    </source>
</evidence>
<evidence type="ECO:0000255" key="3">
    <source>
        <dbReference type="PROSITE-ProRule" id="PRU00028"/>
    </source>
</evidence>
<evidence type="ECO:0000305" key="4"/>
<keyword id="KW-0007">Acetylation</keyword>
<keyword id="KW-0273">Eye lens protein</keyword>
<keyword id="KW-1185">Reference proteome</keyword>
<keyword id="KW-0677">Repeat</keyword>
<comment type="function">
    <text evidence="1">Crystallins are the dominant structural components of the vertebrate eye lens.</text>
</comment>
<comment type="subunit">
    <text evidence="1">Homo/heterodimer, or complexes of higher-order. The structure of beta-crystallin oligomers seems to be stabilized through interactions between the N-terminal arms (By similarity).</text>
</comment>
<comment type="domain">
    <text>Has a two-domain beta-structure, folded into four very similar Greek key motifs.</text>
</comment>
<comment type="similarity">
    <text evidence="4">Belongs to the beta/gamma-crystallin family.</text>
</comment>